<name>RLR16_PLAVT</name>
<feature type="signal peptide" evidence="1">
    <location>
        <begin position="1"/>
        <end position="19"/>
    </location>
</feature>
<feature type="chain" id="PRO_5008116100" description="Secreted RxLR effector protein 16">
    <location>
        <begin position="20"/>
        <end position="265"/>
    </location>
</feature>
<feature type="short sequence motif" description="RxLR-dEER" evidence="9">
    <location>
        <begin position="46"/>
        <end position="61"/>
    </location>
</feature>
<feature type="glycosylation site" description="N-linked (GlcNAc...) asparagine" evidence="2">
    <location>
        <position position="170"/>
    </location>
</feature>
<feature type="glycosylation site" description="N-linked (GlcNAc...) asparagine" evidence="2">
    <location>
        <position position="219"/>
    </location>
</feature>
<feature type="glycosylation site" description="N-linked (GlcNAc...) asparagine" evidence="2">
    <location>
        <position position="240"/>
    </location>
</feature>
<feature type="mutagenesis site" description="Does not affect host cell death-inducing activity." evidence="4">
    <original>N</original>
    <variation>A</variation>
    <location>
        <position position="170"/>
    </location>
</feature>
<feature type="mutagenesis site" description="Does not affect host cell death-inducing activity." evidence="4">
    <original>N</original>
    <variation>A</variation>
    <location>
        <position position="219"/>
    </location>
</feature>
<feature type="mutagenesis site" description="Impairs host cell death-inducing activity." evidence="4">
    <original>N</original>
    <variation>A</variation>
    <location>
        <position position="240"/>
    </location>
</feature>
<comment type="function">
    <text evidence="3 4">Effector that acts as an elicitor that induces cell death and promotes ROS accumulation in Nicotian benthamiana (PubMed:27242731, PubMed:28410577). RxLR16-triggered cell death is dependent on SGT1, HSP90 and RAR1, but independent of the somatic embryogenesis receptor-like kinase SERK3/BAK1, indicating that it acts independently of the detection of cell surface pattern recognition receptors (PubMed:28410577). Enhances the expressional levels of defense-associated genes involved in the salicylic acid-, jasmonate acid-, and ethylene-mediated signal transduction, resulting in disease resistance (PubMed:28410577). However, as some other Plasmopara viticola RxLR effectors including RxLR1, RxLR10, RxLR30 and RxLR25, can suppress defense responses and disease resistance induced by RxLR16, it may not trigger host cell death or immune responses during physiological infection under natural conditions (PubMed:28410577).</text>
</comment>
<comment type="subcellular location">
    <subcellularLocation>
        <location evidence="3">Secreted</location>
    </subcellularLocation>
    <subcellularLocation>
        <location evidence="3 4">Host nucleus</location>
    </subcellularLocation>
    <text evidence="4">Host nuclear localization is required to elicit cell death.</text>
</comment>
<comment type="induction">
    <text evidence="3 5">Expression is up-regulated at the earlier infection stages.</text>
</comment>
<comment type="domain">
    <text evidence="9">The RxLR-dEER motif acts to carry the protein into the host cell cytoplasm through binding to cell surface phosphatidylinositol-3-phosphate.</text>
</comment>
<comment type="PTM">
    <text evidence="4 8">N-glycosylated (Probable). The putative N-glycosylation site at position 240 is essential for cell death-inducing activity (PubMed:28410577).</text>
</comment>
<comment type="similarity">
    <text evidence="7">Belongs to the RxLR effector family.</text>
</comment>
<gene>
    <name evidence="6" type="primary">RxLR16</name>
</gene>
<accession>A0A182BSR9</accession>
<keyword id="KW-0325">Glycoprotein</keyword>
<keyword id="KW-1048">Host nucleus</keyword>
<keyword id="KW-0964">Secreted</keyword>
<keyword id="KW-0732">Signal</keyword>
<keyword id="KW-0843">Virulence</keyword>
<proteinExistence type="evidence at protein level"/>
<reference key="1">
    <citation type="journal article" date="2016" name="Front. Microbiol.">
        <title>Studying the mechanism of Plasmopara viticola RxLR effectors on suppressing plant immunity.</title>
        <authorList>
            <person name="Xiang J."/>
            <person name="Li X."/>
            <person name="Wu J."/>
            <person name="Yin L."/>
            <person name="Zhang Y."/>
            <person name="Lu J."/>
        </authorList>
    </citation>
    <scope>NUCLEOTIDE SEQUENCE [MRNA]</scope>
    <scope>INDUCTION</scope>
    <scope>FUNCTION</scope>
    <scope>SUBCELLULAR LOCATION</scope>
    <source>
        <strain>ZJ-1-1</strain>
    </source>
</reference>
<reference key="2">
    <citation type="journal article" date="2015" name="Physiol. Mol. Plant Pathol.">
        <title>Characterization of the secretome of Plasmopara viticola by de novo transcriptome analysis.</title>
        <authorList>
            <person name="Yin L."/>
            <person name="Li X."/>
            <person name="Xiang J."/>
            <person name="Qu J."/>
            <person name="Zhang Y."/>
            <person name="Dry I.B."/>
            <person name="Lu J."/>
        </authorList>
    </citation>
    <scope>IDENTIFICATION</scope>
    <scope>INDUCTION</scope>
    <scope>DOMAIN</scope>
</reference>
<reference key="3">
    <citation type="journal article" date="2017" name="BMC Plant Biol.">
        <title>A candidate RxLR effector from Plasmopara viticola can elicit immune responses in Nicotiana benthamiana.</title>
        <authorList>
            <person name="Xiang J."/>
            <person name="Li X."/>
            <person name="Yin L."/>
            <person name="Liu Y."/>
            <person name="Zhang Y."/>
            <person name="Qu J."/>
            <person name="Lu J."/>
        </authorList>
    </citation>
    <scope>FUNCTION</scope>
    <scope>SUBCELLULAR LOCATION</scope>
    <scope>MUTAGENESIS OF ASN-170; ASN-219 AND ASN-240</scope>
</reference>
<dbReference type="EMBL" id="KX010952">
    <property type="protein sequence ID" value="ANC73372.1"/>
    <property type="molecule type" value="mRNA"/>
</dbReference>
<dbReference type="GlyCosmos" id="A0A182BSR9">
    <property type="glycosylation" value="3 sites, No reported glycans"/>
</dbReference>
<dbReference type="GO" id="GO:0005576">
    <property type="term" value="C:extracellular region"/>
    <property type="evidence" value="ECO:0007669"/>
    <property type="project" value="UniProtKB-SubCell"/>
</dbReference>
<dbReference type="GO" id="GO:0042025">
    <property type="term" value="C:host cell nucleus"/>
    <property type="evidence" value="ECO:0007669"/>
    <property type="project" value="UniProtKB-SubCell"/>
</dbReference>
<protein>
    <recommendedName>
        <fullName evidence="6">Secreted RxLR effector protein 16</fullName>
    </recommendedName>
</protein>
<evidence type="ECO:0000255" key="1"/>
<evidence type="ECO:0000255" key="2">
    <source>
        <dbReference type="PROSITE-ProRule" id="PRU00498"/>
    </source>
</evidence>
<evidence type="ECO:0000269" key="3">
    <source>
    </source>
</evidence>
<evidence type="ECO:0000269" key="4">
    <source>
    </source>
</evidence>
<evidence type="ECO:0000269" key="5">
    <source ref="2"/>
</evidence>
<evidence type="ECO:0000303" key="6">
    <source ref="2"/>
</evidence>
<evidence type="ECO:0000305" key="7"/>
<evidence type="ECO:0000305" key="8">
    <source>
    </source>
</evidence>
<evidence type="ECO:0000305" key="9">
    <source ref="2"/>
</evidence>
<organism>
    <name type="scientific">Plasmopara viticola</name>
    <name type="common">Downy mildew of grapevine</name>
    <name type="synonym">Botrytis viticola</name>
    <dbReference type="NCBI Taxonomy" id="143451"/>
    <lineage>
        <taxon>Eukaryota</taxon>
        <taxon>Sar</taxon>
        <taxon>Stramenopiles</taxon>
        <taxon>Oomycota</taxon>
        <taxon>Peronosporales</taxon>
        <taxon>Peronosporaceae</taxon>
        <taxon>Plasmopara</taxon>
    </lineage>
</organism>
<sequence length="265" mass="29612">MRGAFYIAIALLIVRSRTATGNAKSDVSRPYVVATGGESTKATPKRYLRGGLALSATNEERMDATVLSKDAKALATEGEDWLRLSLGPVGHSQTPQLKRKFDSLSAIDESSPSKKLATPDRAFTRRFRAEDPQLPKYSKIHQTFLNIPHMPHKISLTEAVLMYRMVNWKNGSSPTKQKSAEALLRLVERTSADDLERALGPTSVRLASQKKIRDEYFKNLTTMYARVHAFCHANPAECTNESTHSPLERKMKAPPDIVLFPLFNR</sequence>